<protein>
    <recommendedName>
        <fullName evidence="1">Large ribosomal subunit protein bL31B</fullName>
    </recommendedName>
    <alternativeName>
        <fullName evidence="2">50S ribosomal protein L31 type B</fullName>
    </alternativeName>
</protein>
<evidence type="ECO:0000255" key="1">
    <source>
        <dbReference type="HAMAP-Rule" id="MF_00502"/>
    </source>
</evidence>
<evidence type="ECO:0000305" key="2"/>
<feature type="chain" id="PRO_1000126782" description="Large ribosomal subunit protein bL31B">
    <location>
        <begin position="1"/>
        <end position="82"/>
    </location>
</feature>
<dbReference type="EMBL" id="CP001102">
    <property type="protein sequence ID" value="ACE06139.1"/>
    <property type="molecule type" value="Genomic_DNA"/>
</dbReference>
<dbReference type="RefSeq" id="WP_012472908.1">
    <property type="nucleotide sequence ID" value="NC_010830.1"/>
</dbReference>
<dbReference type="SMR" id="B3ESD7"/>
<dbReference type="STRING" id="452471.Aasi_0758"/>
<dbReference type="KEGG" id="aas:Aasi_0758"/>
<dbReference type="eggNOG" id="COG0254">
    <property type="taxonomic scope" value="Bacteria"/>
</dbReference>
<dbReference type="HOGENOM" id="CLU_114306_2_2_10"/>
<dbReference type="OrthoDB" id="9803251at2"/>
<dbReference type="Proteomes" id="UP000001227">
    <property type="component" value="Chromosome"/>
</dbReference>
<dbReference type="GO" id="GO:1990904">
    <property type="term" value="C:ribonucleoprotein complex"/>
    <property type="evidence" value="ECO:0007669"/>
    <property type="project" value="UniProtKB-KW"/>
</dbReference>
<dbReference type="GO" id="GO:0005840">
    <property type="term" value="C:ribosome"/>
    <property type="evidence" value="ECO:0007669"/>
    <property type="project" value="UniProtKB-KW"/>
</dbReference>
<dbReference type="GO" id="GO:0003735">
    <property type="term" value="F:structural constituent of ribosome"/>
    <property type="evidence" value="ECO:0007669"/>
    <property type="project" value="InterPro"/>
</dbReference>
<dbReference type="GO" id="GO:0006412">
    <property type="term" value="P:translation"/>
    <property type="evidence" value="ECO:0007669"/>
    <property type="project" value="UniProtKB-UniRule"/>
</dbReference>
<dbReference type="Gene3D" id="4.10.830.30">
    <property type="entry name" value="Ribosomal protein L31"/>
    <property type="match status" value="1"/>
</dbReference>
<dbReference type="HAMAP" id="MF_00502">
    <property type="entry name" value="Ribosomal_bL31_2"/>
    <property type="match status" value="1"/>
</dbReference>
<dbReference type="InterPro" id="IPR034704">
    <property type="entry name" value="Ribosomal_bL28/bL31-like_sf"/>
</dbReference>
<dbReference type="InterPro" id="IPR002150">
    <property type="entry name" value="Ribosomal_bL31"/>
</dbReference>
<dbReference type="InterPro" id="IPR027493">
    <property type="entry name" value="Ribosomal_bL31_B"/>
</dbReference>
<dbReference type="InterPro" id="IPR042105">
    <property type="entry name" value="Ribosomal_bL31_sf"/>
</dbReference>
<dbReference type="NCBIfam" id="TIGR00105">
    <property type="entry name" value="L31"/>
    <property type="match status" value="1"/>
</dbReference>
<dbReference type="NCBIfam" id="NF002462">
    <property type="entry name" value="PRK01678.1"/>
    <property type="match status" value="1"/>
</dbReference>
<dbReference type="PANTHER" id="PTHR33280">
    <property type="entry name" value="50S RIBOSOMAL PROTEIN L31, CHLOROPLASTIC"/>
    <property type="match status" value="1"/>
</dbReference>
<dbReference type="PANTHER" id="PTHR33280:SF1">
    <property type="entry name" value="LARGE RIBOSOMAL SUBUNIT PROTEIN BL31C"/>
    <property type="match status" value="1"/>
</dbReference>
<dbReference type="Pfam" id="PF01197">
    <property type="entry name" value="Ribosomal_L31"/>
    <property type="match status" value="1"/>
</dbReference>
<dbReference type="PRINTS" id="PR01249">
    <property type="entry name" value="RIBOSOMALL31"/>
</dbReference>
<dbReference type="SUPFAM" id="SSF143800">
    <property type="entry name" value="L28p-like"/>
    <property type="match status" value="1"/>
</dbReference>
<gene>
    <name evidence="1" type="primary">rpmE2</name>
    <name type="ordered locus">Aasi_0758</name>
</gene>
<organism>
    <name type="scientific">Amoebophilus asiaticus (strain 5a2)</name>
    <dbReference type="NCBI Taxonomy" id="452471"/>
    <lineage>
        <taxon>Bacteria</taxon>
        <taxon>Pseudomonadati</taxon>
        <taxon>Bacteroidota</taxon>
        <taxon>Cytophagia</taxon>
        <taxon>Cytophagales</taxon>
        <taxon>Amoebophilaceae</taxon>
        <taxon>Candidatus Amoebophilus</taxon>
    </lineage>
</organism>
<comment type="subunit">
    <text evidence="1">Part of the 50S ribosomal subunit.</text>
</comment>
<comment type="similarity">
    <text evidence="1">Belongs to the bacterial ribosomal protein bL31 family. Type B subfamily.</text>
</comment>
<sequence>MKKGIHPTYREVVFLDTSSNFKFLTRSTLNSRETIKWEDGQEYPLIKVELSSASHPFYTGKKIFVDTAGRVEKFQQKYKKRS</sequence>
<proteinExistence type="inferred from homology"/>
<accession>B3ESD7</accession>
<name>RL31B_AMOA5</name>
<keyword id="KW-1185">Reference proteome</keyword>
<keyword id="KW-0687">Ribonucleoprotein</keyword>
<keyword id="KW-0689">Ribosomal protein</keyword>
<reference key="1">
    <citation type="journal article" date="2010" name="J. Bacteriol.">
        <title>The genome of the amoeba symbiont 'Candidatus Amoebophilus asiaticus' reveals common mechanisms for host cell interaction among amoeba-associated bacteria.</title>
        <authorList>
            <person name="Schmitz-Esser S."/>
            <person name="Tischler P."/>
            <person name="Arnold R."/>
            <person name="Montanaro J."/>
            <person name="Wagner M."/>
            <person name="Rattei T."/>
            <person name="Horn M."/>
        </authorList>
    </citation>
    <scope>NUCLEOTIDE SEQUENCE [LARGE SCALE GENOMIC DNA]</scope>
    <source>
        <strain>5a2</strain>
    </source>
</reference>